<dbReference type="SMR" id="P0CU44"/>
<dbReference type="GO" id="GO:0005737">
    <property type="term" value="C:cytoplasm"/>
    <property type="evidence" value="ECO:0007669"/>
    <property type="project" value="UniProtKB-SubCell"/>
</dbReference>
<dbReference type="GO" id="GO:0009269">
    <property type="term" value="P:response to desiccation"/>
    <property type="evidence" value="ECO:0000315"/>
    <property type="project" value="DisProt"/>
</dbReference>
<dbReference type="DisProt" id="DP01379"/>
<evidence type="ECO:0000250" key="1">
    <source>
        <dbReference type="UniProtKB" id="J7M799"/>
    </source>
</evidence>
<evidence type="ECO:0000255" key="2"/>
<evidence type="ECO:0000256" key="3">
    <source>
        <dbReference type="SAM" id="MobiDB-lite"/>
    </source>
</evidence>
<evidence type="ECO:0000269" key="4">
    <source>
    </source>
</evidence>
<evidence type="ECO:0000269" key="5">
    <source>
    </source>
</evidence>
<evidence type="ECO:0000303" key="6">
    <source>
    </source>
</evidence>
<evidence type="ECO:0000305" key="7"/>
<evidence type="ECO:0000305" key="8">
    <source>
    </source>
</evidence>
<evidence type="ECO:0000305" key="9">
    <source>
    </source>
</evidence>
<organism evidence="6">
    <name type="scientific">Hypsibius exemplaris</name>
    <name type="common">Freshwater tardigrade</name>
    <dbReference type="NCBI Taxonomy" id="2072580"/>
    <lineage>
        <taxon>Eukaryota</taxon>
        <taxon>Metazoa</taxon>
        <taxon>Ecdysozoa</taxon>
        <taxon>Tardigrada</taxon>
        <taxon>Eutardigrada</taxon>
        <taxon>Parachela</taxon>
        <taxon>Hypsibioidea</taxon>
        <taxon>Hypsibiidae</taxon>
        <taxon>Hypsibius</taxon>
    </lineage>
</organism>
<comment type="function">
    <text evidence="4 5 9">CAHS proteins are cytosolic heat soluble proteins that seem to contribute to the anhydrobiosis in tardigrades, but their specific mechanisms are yet to be identified (PubMed:28306513, PubMed:33545053). It is possible that protection during anhydrobiosis might occur via the stabilization of vitrifying small molecules such as sugars, but not via the direct glass transition of CAHS proteins themselves (Probable).</text>
</comment>
<comment type="subcellular location">
    <subcellularLocation>
        <location evidence="8">Cytoplasm</location>
    </subcellularLocation>
</comment>
<comment type="induction">
    <text evidence="4">Expression is highly induced during desiccation (PubMed:28306513).</text>
</comment>
<comment type="domain">
    <text evidence="1">CAHS proteins contain 2 repeats of 19-mer peptides designated as CAHS-motifs that comprise each two octapeptides connected by a tripeptide (By similarity).</text>
</comment>
<comment type="disruption phenotype">
    <text evidence="4">Results in a significant decrease in survival after desiccation but does not affect survival under frozen conditions (PubMed:28306513).</text>
</comment>
<comment type="miscellaneous">
    <text evidence="4">Trehalose, a disaccharide essential for several organisms to survive drying, is detected at low levels or not at all in some tardigrade species, indicating that tardigrades possess potentially novel mechanisms for surviving desiccation involving tardigrade-specific intrinsically disordered proteins (TDPs) (PubMed:28306513).</text>
</comment>
<comment type="similarity">
    <text evidence="7">Belongs to the Cytosolic-abundant heat soluble protein (CAHS) family.</text>
</comment>
<comment type="caution">
    <text evidence="4 5">It was suggested that CAHS proteins were intrinsically unstructured and show heat-dependent glass transition, which contributes to the vitrification of cells, and this further leads to desiccation tolerance (PubMed:28306513). However, more recent studies led to the conclusion that there was no evidence supporting glass transition of CAHS proteins to be contributing to the glass transition of the whole tardigrade (PubMed:33545053).</text>
</comment>
<gene>
    <name evidence="6" type="primary">CAHS 77611</name>
</gene>
<proteinExistence type="evidence at transcript level"/>
<name>CAHS4_HYPEX</name>
<feature type="chain" id="PRO_0000440193" description="Cytosolic-abundant heat soluble protein 77611">
    <location>
        <begin position="1"/>
        <end position="224"/>
    </location>
</feature>
<feature type="region of interest" description="Disordered" evidence="3">
    <location>
        <begin position="1"/>
        <end position="38"/>
    </location>
</feature>
<feature type="region of interest" description="CAHS motif 1" evidence="1">
    <location>
        <begin position="122"/>
        <end position="140"/>
    </location>
</feature>
<feature type="region of interest" description="CAHS motif 2" evidence="1">
    <location>
        <begin position="159"/>
        <end position="177"/>
    </location>
</feature>
<feature type="region of interest" description="Disordered" evidence="3">
    <location>
        <begin position="200"/>
        <end position="224"/>
    </location>
</feature>
<feature type="coiled-coil region" evidence="2">
    <location>
        <begin position="80"/>
        <end position="191"/>
    </location>
</feature>
<feature type="compositionally biased region" description="Low complexity" evidence="3">
    <location>
        <begin position="1"/>
        <end position="13"/>
    </location>
</feature>
<feature type="compositionally biased region" description="Basic and acidic residues" evidence="3">
    <location>
        <begin position="24"/>
        <end position="38"/>
    </location>
</feature>
<feature type="compositionally biased region" description="Low complexity" evidence="3">
    <location>
        <begin position="200"/>
        <end position="215"/>
    </location>
</feature>
<protein>
    <recommendedName>
        <fullName evidence="6">Cytosolic-abundant heat soluble protein 77611</fullName>
        <shortName evidence="6">CAHS 77611</shortName>
    </recommendedName>
    <alternativeName>
        <fullName evidence="6">Tardigrade-specific intrinsically disordered protein CAHS 77611</fullName>
        <shortName evidence="6">TDP CAHS 77611</shortName>
    </alternativeName>
</protein>
<sequence length="224" mass="25905">MSNYQQESSYQYSDRSNNGQQQEQQEKKEVEHSSYTHTDVKVNMPNLIAPFISSSAGLAQELVGEGFQASVSRITGASGELTVIDTEAETEEARRDLEAKAREQELLSRQFEKELERKTEAYRKQQEVETEKIRKELEKQHLRDVEFRKELMEQTIENQKRQIDLEARYAKKELERERNKVKRVLERSKFHTDIQVNMEAAAGSTHSGSSSVAVSESEKFQTNN</sequence>
<reference key="1">
    <citation type="journal article" date="2017" name="Mol. Cell">
        <title>Tardigrades use intrinsically disordered proteins to survive desiccation.</title>
        <authorList>
            <person name="Boothby T.C."/>
            <person name="Tapia H."/>
            <person name="Brozena A.H."/>
            <person name="Piszkiewicz S."/>
            <person name="Smith A.E."/>
            <person name="Giovannini I."/>
            <person name="Rebecchi L."/>
            <person name="Pielak G.J."/>
            <person name="Koshland D."/>
            <person name="Goldstein B."/>
        </authorList>
    </citation>
    <scope>FUNCTION</scope>
    <scope>INDUCTION</scope>
    <scope>DISRUPTION PHENOTYPE</scope>
</reference>
<reference key="2">
    <citation type="journal article" date="2021" name="Mol. Cell">
        <title>Reconsidering the 'glass transition' hypothesis of intrinsically unstructured CAHS proteins in desiccation tolerance of tardigrades.</title>
        <authorList>
            <person name="Arakawa K."/>
            <person name="Numata K."/>
        </authorList>
    </citation>
    <scope>FUNCTION</scope>
</reference>
<accession>P0CU44</accession>
<keyword id="KW-0175">Coiled coil</keyword>
<keyword id="KW-0963">Cytoplasm</keyword>
<keyword id="KW-0677">Repeat</keyword>
<keyword id="KW-0346">Stress response</keyword>